<dbReference type="EC" id="5.4.2.7" evidence="1"/>
<dbReference type="EMBL" id="CP000568">
    <property type="protein sequence ID" value="ABN51912.1"/>
    <property type="molecule type" value="Genomic_DNA"/>
</dbReference>
<dbReference type="RefSeq" id="WP_003516667.1">
    <property type="nucleotide sequence ID" value="NC_009012.1"/>
</dbReference>
<dbReference type="SMR" id="A3DD83"/>
<dbReference type="STRING" id="203119.Cthe_0677"/>
<dbReference type="GeneID" id="35803778"/>
<dbReference type="KEGG" id="cth:Cthe_0677"/>
<dbReference type="eggNOG" id="COG1015">
    <property type="taxonomic scope" value="Bacteria"/>
</dbReference>
<dbReference type="HOGENOM" id="CLU_053861_0_0_9"/>
<dbReference type="OrthoDB" id="9769930at2"/>
<dbReference type="UniPathway" id="UPA00002">
    <property type="reaction ID" value="UER00467"/>
</dbReference>
<dbReference type="Proteomes" id="UP000002145">
    <property type="component" value="Chromosome"/>
</dbReference>
<dbReference type="GO" id="GO:0005829">
    <property type="term" value="C:cytosol"/>
    <property type="evidence" value="ECO:0007669"/>
    <property type="project" value="TreeGrafter"/>
</dbReference>
<dbReference type="GO" id="GO:0000287">
    <property type="term" value="F:magnesium ion binding"/>
    <property type="evidence" value="ECO:0007669"/>
    <property type="project" value="InterPro"/>
</dbReference>
<dbReference type="GO" id="GO:0030145">
    <property type="term" value="F:manganese ion binding"/>
    <property type="evidence" value="ECO:0007669"/>
    <property type="project" value="UniProtKB-UniRule"/>
</dbReference>
<dbReference type="GO" id="GO:0008973">
    <property type="term" value="F:phosphopentomutase activity"/>
    <property type="evidence" value="ECO:0007669"/>
    <property type="project" value="UniProtKB-UniRule"/>
</dbReference>
<dbReference type="GO" id="GO:0006018">
    <property type="term" value="P:2-deoxyribose 1-phosphate catabolic process"/>
    <property type="evidence" value="ECO:0007669"/>
    <property type="project" value="UniProtKB-UniRule"/>
</dbReference>
<dbReference type="GO" id="GO:0006015">
    <property type="term" value="P:5-phosphoribose 1-diphosphate biosynthetic process"/>
    <property type="evidence" value="ECO:0007669"/>
    <property type="project" value="UniProtKB-UniPathway"/>
</dbReference>
<dbReference type="GO" id="GO:0043094">
    <property type="term" value="P:metabolic compound salvage"/>
    <property type="evidence" value="ECO:0007669"/>
    <property type="project" value="InterPro"/>
</dbReference>
<dbReference type="GO" id="GO:0009117">
    <property type="term" value="P:nucleotide metabolic process"/>
    <property type="evidence" value="ECO:0007669"/>
    <property type="project" value="InterPro"/>
</dbReference>
<dbReference type="CDD" id="cd16009">
    <property type="entry name" value="PPM"/>
    <property type="match status" value="1"/>
</dbReference>
<dbReference type="FunFam" id="3.30.70.1250:FF:000001">
    <property type="entry name" value="Phosphopentomutase"/>
    <property type="match status" value="1"/>
</dbReference>
<dbReference type="Gene3D" id="3.40.720.10">
    <property type="entry name" value="Alkaline Phosphatase, subunit A"/>
    <property type="match status" value="1"/>
</dbReference>
<dbReference type="Gene3D" id="3.30.70.1250">
    <property type="entry name" value="Phosphopentomutase"/>
    <property type="match status" value="1"/>
</dbReference>
<dbReference type="HAMAP" id="MF_00740">
    <property type="entry name" value="Phosphopentomut"/>
    <property type="match status" value="1"/>
</dbReference>
<dbReference type="InterPro" id="IPR017850">
    <property type="entry name" value="Alkaline_phosphatase_core_sf"/>
</dbReference>
<dbReference type="InterPro" id="IPR010045">
    <property type="entry name" value="DeoB"/>
</dbReference>
<dbReference type="InterPro" id="IPR006124">
    <property type="entry name" value="Metalloenzyme"/>
</dbReference>
<dbReference type="InterPro" id="IPR024052">
    <property type="entry name" value="Phosphopentomutase_DeoB_cap_sf"/>
</dbReference>
<dbReference type="NCBIfam" id="TIGR01696">
    <property type="entry name" value="deoB"/>
    <property type="match status" value="1"/>
</dbReference>
<dbReference type="NCBIfam" id="NF003766">
    <property type="entry name" value="PRK05362.1"/>
    <property type="match status" value="1"/>
</dbReference>
<dbReference type="PANTHER" id="PTHR21110">
    <property type="entry name" value="PHOSPHOPENTOMUTASE"/>
    <property type="match status" value="1"/>
</dbReference>
<dbReference type="PANTHER" id="PTHR21110:SF0">
    <property type="entry name" value="PHOSPHOPENTOMUTASE"/>
    <property type="match status" value="1"/>
</dbReference>
<dbReference type="Pfam" id="PF01676">
    <property type="entry name" value="Metalloenzyme"/>
    <property type="match status" value="1"/>
</dbReference>
<dbReference type="PIRSF" id="PIRSF001491">
    <property type="entry name" value="Ppentomutase"/>
    <property type="match status" value="1"/>
</dbReference>
<dbReference type="SUPFAM" id="SSF53649">
    <property type="entry name" value="Alkaline phosphatase-like"/>
    <property type="match status" value="1"/>
</dbReference>
<dbReference type="SUPFAM" id="SSF143856">
    <property type="entry name" value="DeoB insert domain-like"/>
    <property type="match status" value="1"/>
</dbReference>
<accession>A3DD83</accession>
<name>DEOB_ACET2</name>
<comment type="function">
    <text evidence="1">Isomerase that catalyzes the conversion of deoxy-ribose 1-phosphate (dRib-1-P) and ribose 1-phosphate (Rib-1-P) to deoxy-ribose 5-phosphate (dRib-5-P) and ribose 5-phosphate (Rib-5-P), respectively.</text>
</comment>
<comment type="catalytic activity">
    <reaction evidence="1">
        <text>2-deoxy-alpha-D-ribose 1-phosphate = 2-deoxy-D-ribose 5-phosphate</text>
        <dbReference type="Rhea" id="RHEA:27658"/>
        <dbReference type="ChEBI" id="CHEBI:57259"/>
        <dbReference type="ChEBI" id="CHEBI:62877"/>
        <dbReference type="EC" id="5.4.2.7"/>
    </reaction>
</comment>
<comment type="catalytic activity">
    <reaction evidence="1">
        <text>alpha-D-ribose 1-phosphate = D-ribose 5-phosphate</text>
        <dbReference type="Rhea" id="RHEA:18793"/>
        <dbReference type="ChEBI" id="CHEBI:57720"/>
        <dbReference type="ChEBI" id="CHEBI:78346"/>
        <dbReference type="EC" id="5.4.2.7"/>
    </reaction>
</comment>
<comment type="cofactor">
    <cofactor evidence="1">
        <name>Mn(2+)</name>
        <dbReference type="ChEBI" id="CHEBI:29035"/>
    </cofactor>
    <text evidence="1">Binds 2 manganese ions.</text>
</comment>
<comment type="pathway">
    <text evidence="1">Carbohydrate degradation; 2-deoxy-D-ribose 1-phosphate degradation; D-glyceraldehyde 3-phosphate and acetaldehyde from 2-deoxy-alpha-D-ribose 1-phosphate: step 1/2.</text>
</comment>
<comment type="subcellular location">
    <subcellularLocation>
        <location evidence="1">Cytoplasm</location>
    </subcellularLocation>
</comment>
<comment type="similarity">
    <text evidence="1">Belongs to the phosphopentomutase family.</text>
</comment>
<sequence length="388" mass="42588">MKRAIIIVLDSVGMGELPDAAKYGDEGSNTLGNIAKNLPDFSLPNLESLGLGNIDGMTGYEPSKNPLGSYGRMAEKSAGKDTTTGHWEIAGLILDKPFPVYPNGFPEDIIKRFEDSIGTKTLGNVPASGTEIIKLLGDEHVKTGYPIVYTSADSVFQIAAHENVIPVERLYDMCRTARNILTGEHAVGRVIARPFIGESGNYKRTDRRKDFSLAPVGKTLLDYAVENGYKVKAVGKIEDIFGGRGITESVHIHDNMDGVDRTLEYMRDDFEGILFTNLVDFDMLYGHRNDIAGYANALKEFDRRIPEILANLREDDLLVITADHGCDPSTESTDHSREYVPLLVYGKKFKSNVNLGTRSTFADVAKTVAHYLGISSNLEGESFLGSIL</sequence>
<proteinExistence type="inferred from homology"/>
<gene>
    <name evidence="1" type="primary">deoB</name>
    <name type="ordered locus">Cthe_0677</name>
</gene>
<reference key="1">
    <citation type="submission" date="2007-02" db="EMBL/GenBank/DDBJ databases">
        <title>Complete sequence of Clostridium thermocellum ATCC 27405.</title>
        <authorList>
            <consortium name="US DOE Joint Genome Institute"/>
            <person name="Copeland A."/>
            <person name="Lucas S."/>
            <person name="Lapidus A."/>
            <person name="Barry K."/>
            <person name="Detter J.C."/>
            <person name="Glavina del Rio T."/>
            <person name="Hammon N."/>
            <person name="Israni S."/>
            <person name="Dalin E."/>
            <person name="Tice H."/>
            <person name="Pitluck S."/>
            <person name="Chertkov O."/>
            <person name="Brettin T."/>
            <person name="Bruce D."/>
            <person name="Han C."/>
            <person name="Tapia R."/>
            <person name="Gilna P."/>
            <person name="Schmutz J."/>
            <person name="Larimer F."/>
            <person name="Land M."/>
            <person name="Hauser L."/>
            <person name="Kyrpides N."/>
            <person name="Mikhailova N."/>
            <person name="Wu J.H.D."/>
            <person name="Newcomb M."/>
            <person name="Richardson P."/>
        </authorList>
    </citation>
    <scope>NUCLEOTIDE SEQUENCE [LARGE SCALE GENOMIC DNA]</scope>
    <source>
        <strain>ATCC 27405 / DSM 1237 / JCM 9322 / NBRC 103400 / NCIMB 10682 / NRRL B-4536 / VPI 7372</strain>
    </source>
</reference>
<protein>
    <recommendedName>
        <fullName evidence="1">Phosphopentomutase</fullName>
        <ecNumber evidence="1">5.4.2.7</ecNumber>
    </recommendedName>
    <alternativeName>
        <fullName evidence="1">Phosphodeoxyribomutase</fullName>
    </alternativeName>
</protein>
<feature type="chain" id="PRO_1000046384" description="Phosphopentomutase">
    <location>
        <begin position="1"/>
        <end position="388"/>
    </location>
</feature>
<feature type="binding site" evidence="1">
    <location>
        <position position="10"/>
    </location>
    <ligand>
        <name>Mn(2+)</name>
        <dbReference type="ChEBI" id="CHEBI:29035"/>
        <label>1</label>
    </ligand>
</feature>
<feature type="binding site" evidence="1">
    <location>
        <position position="282"/>
    </location>
    <ligand>
        <name>Mn(2+)</name>
        <dbReference type="ChEBI" id="CHEBI:29035"/>
        <label>2</label>
    </ligand>
</feature>
<feature type="binding site" evidence="1">
    <location>
        <position position="287"/>
    </location>
    <ligand>
        <name>Mn(2+)</name>
        <dbReference type="ChEBI" id="CHEBI:29035"/>
        <label>2</label>
    </ligand>
</feature>
<feature type="binding site" evidence="1">
    <location>
        <position position="323"/>
    </location>
    <ligand>
        <name>Mn(2+)</name>
        <dbReference type="ChEBI" id="CHEBI:29035"/>
        <label>1</label>
    </ligand>
</feature>
<feature type="binding site" evidence="1">
    <location>
        <position position="324"/>
    </location>
    <ligand>
        <name>Mn(2+)</name>
        <dbReference type="ChEBI" id="CHEBI:29035"/>
        <label>1</label>
    </ligand>
</feature>
<feature type="binding site" evidence="1">
    <location>
        <position position="335"/>
    </location>
    <ligand>
        <name>Mn(2+)</name>
        <dbReference type="ChEBI" id="CHEBI:29035"/>
        <label>2</label>
    </ligand>
</feature>
<evidence type="ECO:0000255" key="1">
    <source>
        <dbReference type="HAMAP-Rule" id="MF_00740"/>
    </source>
</evidence>
<keyword id="KW-0963">Cytoplasm</keyword>
<keyword id="KW-0413">Isomerase</keyword>
<keyword id="KW-0464">Manganese</keyword>
<keyword id="KW-0479">Metal-binding</keyword>
<keyword id="KW-1185">Reference proteome</keyword>
<organism>
    <name type="scientific">Acetivibrio thermocellus (strain ATCC 27405 / DSM 1237 / JCM 9322 / NBRC 103400 / NCIMB 10682 / NRRL B-4536 / VPI 7372)</name>
    <name type="common">Clostridium thermocellum</name>
    <dbReference type="NCBI Taxonomy" id="203119"/>
    <lineage>
        <taxon>Bacteria</taxon>
        <taxon>Bacillati</taxon>
        <taxon>Bacillota</taxon>
        <taxon>Clostridia</taxon>
        <taxon>Eubacteriales</taxon>
        <taxon>Oscillospiraceae</taxon>
        <taxon>Acetivibrio</taxon>
    </lineage>
</organism>